<gene>
    <name type="primary">NCED1</name>
</gene>
<reference key="1">
    <citation type="journal article" date="1999" name="Proc. Natl. Acad. Sci. U.S.A.">
        <title>The 9-cis-epoxycarotenoid cleavage reaction is the key regulatory step of abscisic acid biosynthesis in water-stressed bean.</title>
        <authorList>
            <person name="Qin X."/>
            <person name="Zeevaart J.A."/>
        </authorList>
    </citation>
    <scope>NUCLEOTIDE SEQUENCE [MRNA]</scope>
    <scope>FUNCTION</scope>
    <scope>SUBCELLULAR LOCATION</scope>
    <scope>INDUCTION</scope>
    <source>
        <strain>cv. Top Crop</strain>
        <tissue>Leaf</tissue>
    </source>
</reference>
<keyword id="KW-0937">Abscisic acid biosynthesis</keyword>
<keyword id="KW-0150">Chloroplast</keyword>
<keyword id="KW-0175">Coiled coil</keyword>
<keyword id="KW-0223">Dioxygenase</keyword>
<keyword id="KW-0408">Iron</keyword>
<keyword id="KW-0472">Membrane</keyword>
<keyword id="KW-0479">Metal-binding</keyword>
<keyword id="KW-0560">Oxidoreductase</keyword>
<keyword id="KW-0934">Plastid</keyword>
<keyword id="KW-0346">Stress response</keyword>
<keyword id="KW-0793">Thylakoid</keyword>
<keyword id="KW-0809">Transit peptide</keyword>
<accession>Q9M6E8</accession>
<protein>
    <recommendedName>
        <fullName>9-cis-epoxycarotenoid dioxygenase NCED1, chloroplastic</fullName>
        <ecNumber>1.13.11.51</ecNumber>
    </recommendedName>
    <alternativeName>
        <fullName>PvNCED1</fullName>
    </alternativeName>
</protein>
<sequence>MPSPASNTWINTTLPSSCSSPFKDLASTSSSPTTLLPFKKRSSSNTNTITCSLQTLHYPKQYQPTSTSTTTTPTPIKPTTTTTTTTPHRETKPLSDTKQPFPQKWNFLQKAAATGLDMVETALVSHESKHPLPKTADPKVQIAGNFAPVPEHAADQALPVVGKIPKCIDGVYVRNGANPLYEPVAGHHFFDGDGMVHAVKFTNGAASYACRFTETQRLAQEKSLGRPVFPKAIGELHGHSGIARLLLFYARSLFQLVDGSHGMGVANAGLVYFNNHLLAMSEDDLPYHVRITSNGDLTTVGRYDFNGQLNSTMIAHPKLDPVNGDLHALSYDVVQKPYLKYFRFSADGVKSPDVEIPLKEPTMMHDFAITENFVVVPDQQVVFKLTEMITGGSPVVYDKNKTSRFGILDKNAKDANAMRWIDAPECFCFHLWNAWEEPETDEIVVIGSCMTPADSIFNECDESLKSVLSEIRLNLRTGKSTRRPIISDAEQVNLEAGMVNRNKLGRKTQFAYLALAEPWPKVSGFAKVDLFSGEVQKYMYGEEKFGGEPLFLPNGEEEGDGYILAFVHDEKEWKSELQIVNAQNLKLEASIKLPSRVPYGFHGTFIHSKDLRKQA</sequence>
<evidence type="ECO:0000250" key="1">
    <source>
        <dbReference type="UniProtKB" id="O24592"/>
    </source>
</evidence>
<evidence type="ECO:0000255" key="2"/>
<evidence type="ECO:0000256" key="3">
    <source>
        <dbReference type="SAM" id="MobiDB-lite"/>
    </source>
</evidence>
<evidence type="ECO:0000269" key="4">
    <source>
    </source>
</evidence>
<evidence type="ECO:0000305" key="5"/>
<feature type="transit peptide" description="Chloroplast" evidence="2">
    <location>
        <begin position="1"/>
        <end position="41"/>
    </location>
</feature>
<feature type="chain" id="PRO_0000285992" description="9-cis-epoxycarotenoid dioxygenase NCED1, chloroplastic">
    <location>
        <begin position="42"/>
        <end position="615"/>
    </location>
</feature>
<feature type="region of interest" description="Disordered" evidence="3">
    <location>
        <begin position="20"/>
        <end position="45"/>
    </location>
</feature>
<feature type="region of interest" description="Disordered" evidence="3">
    <location>
        <begin position="62"/>
        <end position="101"/>
    </location>
</feature>
<feature type="coiled-coil region" evidence="2">
    <location>
        <begin position="571"/>
        <end position="592"/>
    </location>
</feature>
<feature type="compositionally biased region" description="Low complexity" evidence="3">
    <location>
        <begin position="27"/>
        <end position="37"/>
    </location>
</feature>
<feature type="compositionally biased region" description="Low complexity" evidence="3">
    <location>
        <begin position="64"/>
        <end position="86"/>
    </location>
</feature>
<feature type="binding site" evidence="1">
    <location>
        <position position="316"/>
    </location>
    <ligand>
        <name>Fe cation</name>
        <dbReference type="ChEBI" id="CHEBI:24875"/>
    </ligand>
</feature>
<feature type="binding site" evidence="1">
    <location>
        <position position="365"/>
    </location>
    <ligand>
        <name>Fe cation</name>
        <dbReference type="ChEBI" id="CHEBI:24875"/>
    </ligand>
</feature>
<feature type="binding site" evidence="1">
    <location>
        <position position="430"/>
    </location>
    <ligand>
        <name>Fe cation</name>
        <dbReference type="ChEBI" id="CHEBI:24875"/>
    </ligand>
</feature>
<feature type="binding site" evidence="1">
    <location>
        <position position="602"/>
    </location>
    <ligand>
        <name>Fe cation</name>
        <dbReference type="ChEBI" id="CHEBI:24875"/>
    </ligand>
</feature>
<proteinExistence type="evidence at transcript level"/>
<dbReference type="EC" id="1.13.11.51"/>
<dbReference type="EMBL" id="AF190462">
    <property type="protein sequence ID" value="AAF26356.1"/>
    <property type="molecule type" value="mRNA"/>
</dbReference>
<dbReference type="SMR" id="Q9M6E8"/>
<dbReference type="SwissLipids" id="SLP:000001488"/>
<dbReference type="KEGG" id="ag:AAF26356"/>
<dbReference type="eggNOG" id="KOG1285">
    <property type="taxonomic scope" value="Eukaryota"/>
</dbReference>
<dbReference type="BRENDA" id="1.13.11.51">
    <property type="organism ID" value="4746"/>
</dbReference>
<dbReference type="GO" id="GO:0009570">
    <property type="term" value="C:chloroplast stroma"/>
    <property type="evidence" value="ECO:0007669"/>
    <property type="project" value="TreeGrafter"/>
</dbReference>
<dbReference type="GO" id="GO:0009535">
    <property type="term" value="C:chloroplast thylakoid membrane"/>
    <property type="evidence" value="ECO:0007669"/>
    <property type="project" value="UniProtKB-SubCell"/>
</dbReference>
<dbReference type="GO" id="GO:0045549">
    <property type="term" value="F:9-cis-epoxycarotenoid dioxygenase activity"/>
    <property type="evidence" value="ECO:0007669"/>
    <property type="project" value="UniProtKB-EC"/>
</dbReference>
<dbReference type="GO" id="GO:0046872">
    <property type="term" value="F:metal ion binding"/>
    <property type="evidence" value="ECO:0007669"/>
    <property type="project" value="UniProtKB-KW"/>
</dbReference>
<dbReference type="GO" id="GO:0009688">
    <property type="term" value="P:abscisic acid biosynthetic process"/>
    <property type="evidence" value="ECO:0007669"/>
    <property type="project" value="UniProtKB-KW"/>
</dbReference>
<dbReference type="GO" id="GO:0016121">
    <property type="term" value="P:carotene catabolic process"/>
    <property type="evidence" value="ECO:0007669"/>
    <property type="project" value="TreeGrafter"/>
</dbReference>
<dbReference type="InterPro" id="IPR004294">
    <property type="entry name" value="Carotenoid_Oase"/>
</dbReference>
<dbReference type="PANTHER" id="PTHR10543:SF26">
    <property type="entry name" value="9-CIS-EPOXYCAROTENOID DIOXYGENASE NCED3, CHLOROPLASTIC"/>
    <property type="match status" value="1"/>
</dbReference>
<dbReference type="PANTHER" id="PTHR10543">
    <property type="entry name" value="BETA-CAROTENE DIOXYGENASE"/>
    <property type="match status" value="1"/>
</dbReference>
<dbReference type="Pfam" id="PF03055">
    <property type="entry name" value="RPE65"/>
    <property type="match status" value="1"/>
</dbReference>
<organism>
    <name type="scientific">Phaseolus vulgaris</name>
    <name type="common">Kidney bean</name>
    <name type="synonym">French bean</name>
    <dbReference type="NCBI Taxonomy" id="3885"/>
    <lineage>
        <taxon>Eukaryota</taxon>
        <taxon>Viridiplantae</taxon>
        <taxon>Streptophyta</taxon>
        <taxon>Embryophyta</taxon>
        <taxon>Tracheophyta</taxon>
        <taxon>Spermatophyta</taxon>
        <taxon>Magnoliopsida</taxon>
        <taxon>eudicotyledons</taxon>
        <taxon>Gunneridae</taxon>
        <taxon>Pentapetalae</taxon>
        <taxon>rosids</taxon>
        <taxon>fabids</taxon>
        <taxon>Fabales</taxon>
        <taxon>Fabaceae</taxon>
        <taxon>Papilionoideae</taxon>
        <taxon>50 kb inversion clade</taxon>
        <taxon>NPAAA clade</taxon>
        <taxon>indigoferoid/millettioid clade</taxon>
        <taxon>Phaseoleae</taxon>
        <taxon>Phaseolus</taxon>
    </lineage>
</organism>
<comment type="function">
    <text evidence="4">Has a 11,12(11',12') 9-cis epoxycarotenoid cleavage activity. Catalyzes the first step of abscisic-acid biosynthesis from carotenoids, in response to water stress. Active on 9-cis-violaxanthin and 9'-cis-neoxanthin, but not on the all-trans isomers of violaxanthin and neoxanthin.</text>
</comment>
<comment type="catalytic activity">
    <reaction>
        <text>a 9-cis-epoxycarotenoid + O2 = a 12'-apo-carotenal + 2-cis,4-trans-xanthoxin</text>
        <dbReference type="Rhea" id="RHEA:23328"/>
        <dbReference type="ChEBI" id="CHEBI:15379"/>
        <dbReference type="ChEBI" id="CHEBI:32304"/>
        <dbReference type="ChEBI" id="CHEBI:51972"/>
        <dbReference type="ChEBI" id="CHEBI:51973"/>
        <dbReference type="EC" id="1.13.11.51"/>
    </reaction>
</comment>
<comment type="catalytic activity">
    <reaction>
        <text>9-cis-violaxanthin + O2 = (3S,5R,6S)-5,6-epoxy-3-hydroxy-5,6-dihydro-12'-apo-beta-caroten-12'-al + 2-cis,4-trans-xanthoxin</text>
        <dbReference type="Rhea" id="RHEA:16541"/>
        <dbReference type="ChEBI" id="CHEBI:15379"/>
        <dbReference type="ChEBI" id="CHEBI:32304"/>
        <dbReference type="ChEBI" id="CHEBI:34597"/>
        <dbReference type="ChEBI" id="CHEBI:35305"/>
        <dbReference type="EC" id="1.13.11.51"/>
    </reaction>
</comment>
<comment type="catalytic activity">
    <reaction>
        <text>9'-cis-neoxanthin + O2 = (3S,5R,6R)-3,5-dihydroxy-6,7-didehydro-5,6-dihydro-12'-apo-beta-caroten-12'-al + 2-cis,4-trans-xanthoxin</text>
        <dbReference type="Rhea" id="RHEA:19677"/>
        <dbReference type="ChEBI" id="CHEBI:15379"/>
        <dbReference type="ChEBI" id="CHEBI:32304"/>
        <dbReference type="ChEBI" id="CHEBI:34596"/>
        <dbReference type="ChEBI" id="CHEBI:35306"/>
        <dbReference type="EC" id="1.13.11.51"/>
    </reaction>
</comment>
<comment type="cofactor">
    <cofactor evidence="1">
        <name>Fe(2+)</name>
        <dbReference type="ChEBI" id="CHEBI:29033"/>
    </cofactor>
    <text evidence="1">Binds 1 Fe(2+) ion per subunit.</text>
</comment>
<comment type="subcellular location">
    <subcellularLocation>
        <location evidence="4">Plastid</location>
        <location evidence="4">Chloroplast thylakoid membrane</location>
    </subcellularLocation>
</comment>
<comment type="induction">
    <text evidence="4">By drought stress.</text>
</comment>
<comment type="miscellaneous">
    <text>Overexpression of NCED1 results in increased accumulation of abscisic acid and resistance to water stress.</text>
</comment>
<comment type="similarity">
    <text evidence="5">Belongs to the carotenoid oxygenase family.</text>
</comment>
<name>NCED1_PHAVU</name>